<dbReference type="EC" id="7.1.1.-" evidence="1"/>
<dbReference type="EMBL" id="DQ345959">
    <property type="protein sequence ID" value="ABC73682.1"/>
    <property type="molecule type" value="Genomic_DNA"/>
</dbReference>
<dbReference type="RefSeq" id="YP_538990.1">
    <property type="nucleotide sequence ID" value="NC_007944.1"/>
</dbReference>
<dbReference type="SMR" id="Q2L955"/>
<dbReference type="GeneID" id="3989241"/>
<dbReference type="KEGG" id="ghi:3989241"/>
<dbReference type="OrthoDB" id="36026at41938"/>
<dbReference type="Proteomes" id="UP000189702">
    <property type="component" value="Chloroplast Pltd"/>
</dbReference>
<dbReference type="GO" id="GO:0009535">
    <property type="term" value="C:chloroplast thylakoid membrane"/>
    <property type="evidence" value="ECO:0007669"/>
    <property type="project" value="UniProtKB-SubCell"/>
</dbReference>
<dbReference type="GO" id="GO:0008137">
    <property type="term" value="F:NADH dehydrogenase (ubiquinone) activity"/>
    <property type="evidence" value="ECO:0007669"/>
    <property type="project" value="InterPro"/>
</dbReference>
<dbReference type="GO" id="GO:0048039">
    <property type="term" value="F:ubiquinone binding"/>
    <property type="evidence" value="ECO:0000318"/>
    <property type="project" value="GO_Central"/>
</dbReference>
<dbReference type="GO" id="GO:0009060">
    <property type="term" value="P:aerobic respiration"/>
    <property type="evidence" value="ECO:0000318"/>
    <property type="project" value="GO_Central"/>
</dbReference>
<dbReference type="GO" id="GO:0042773">
    <property type="term" value="P:ATP synthesis coupled electron transport"/>
    <property type="evidence" value="ECO:0007669"/>
    <property type="project" value="InterPro"/>
</dbReference>
<dbReference type="GO" id="GO:0015990">
    <property type="term" value="P:electron transport coupled proton transport"/>
    <property type="evidence" value="ECO:0000318"/>
    <property type="project" value="GO_Central"/>
</dbReference>
<dbReference type="HAMAP" id="MF_00491">
    <property type="entry name" value="NDH1_NuoM"/>
    <property type="match status" value="1"/>
</dbReference>
<dbReference type="InterPro" id="IPR022997">
    <property type="entry name" value="NADH_Q_OxRdtase_chain4"/>
</dbReference>
<dbReference type="InterPro" id="IPR010227">
    <property type="entry name" value="NADH_Q_OxRdtase_chainM/4"/>
</dbReference>
<dbReference type="InterPro" id="IPR003918">
    <property type="entry name" value="NADH_UbQ_OxRdtase"/>
</dbReference>
<dbReference type="InterPro" id="IPR001750">
    <property type="entry name" value="ND/Mrp_TM"/>
</dbReference>
<dbReference type="NCBIfam" id="TIGR01972">
    <property type="entry name" value="NDH_I_M"/>
    <property type="match status" value="1"/>
</dbReference>
<dbReference type="PANTHER" id="PTHR43507:SF21">
    <property type="entry name" value="NAD(P)H-QUINONE OXIDOREDUCTASE CHAIN 4, CHLOROPLASTIC"/>
    <property type="match status" value="1"/>
</dbReference>
<dbReference type="PANTHER" id="PTHR43507">
    <property type="entry name" value="NADH-UBIQUINONE OXIDOREDUCTASE CHAIN 4"/>
    <property type="match status" value="1"/>
</dbReference>
<dbReference type="Pfam" id="PF00361">
    <property type="entry name" value="Proton_antipo_M"/>
    <property type="match status" value="1"/>
</dbReference>
<dbReference type="PRINTS" id="PR01437">
    <property type="entry name" value="NUOXDRDTASE4"/>
</dbReference>
<protein>
    <recommendedName>
        <fullName evidence="1">NAD(P)H-quinone oxidoreductase chain 4, chloroplastic</fullName>
        <ecNumber evidence="1">7.1.1.-</ecNumber>
    </recommendedName>
    <alternativeName>
        <fullName evidence="1">NAD(P)H dehydrogenase, chain 4</fullName>
    </alternativeName>
    <alternativeName>
        <fullName evidence="1">NADH-plastoquinone oxidoreductase chain 4</fullName>
    </alternativeName>
</protein>
<reference key="1">
    <citation type="journal article" date="2006" name="BMC Genomics">
        <title>The complete chloroplast genome sequence of Gossypium hirsutum: organization and phylogenetic relationships to other angiosperms.</title>
        <authorList>
            <person name="Lee S.-B."/>
            <person name="Kaittanis C."/>
            <person name="Jansen R.K."/>
            <person name="Hostetler J.B."/>
            <person name="Tallon L.J."/>
            <person name="Town C.D."/>
            <person name="Daniell H."/>
        </authorList>
    </citation>
    <scope>NUCLEOTIDE SEQUENCE [LARGE SCALE GENOMIC DNA]</scope>
    <source>
        <strain>cv. Coker 310FR</strain>
    </source>
</reference>
<name>NU4C_GOSHI</name>
<comment type="catalytic activity">
    <reaction evidence="1">
        <text>a plastoquinone + NADH + (n+1) H(+)(in) = a plastoquinol + NAD(+) + n H(+)(out)</text>
        <dbReference type="Rhea" id="RHEA:42608"/>
        <dbReference type="Rhea" id="RHEA-COMP:9561"/>
        <dbReference type="Rhea" id="RHEA-COMP:9562"/>
        <dbReference type="ChEBI" id="CHEBI:15378"/>
        <dbReference type="ChEBI" id="CHEBI:17757"/>
        <dbReference type="ChEBI" id="CHEBI:57540"/>
        <dbReference type="ChEBI" id="CHEBI:57945"/>
        <dbReference type="ChEBI" id="CHEBI:62192"/>
    </reaction>
</comment>
<comment type="catalytic activity">
    <reaction evidence="1">
        <text>a plastoquinone + NADPH + (n+1) H(+)(in) = a plastoquinol + NADP(+) + n H(+)(out)</text>
        <dbReference type="Rhea" id="RHEA:42612"/>
        <dbReference type="Rhea" id="RHEA-COMP:9561"/>
        <dbReference type="Rhea" id="RHEA-COMP:9562"/>
        <dbReference type="ChEBI" id="CHEBI:15378"/>
        <dbReference type="ChEBI" id="CHEBI:17757"/>
        <dbReference type="ChEBI" id="CHEBI:57783"/>
        <dbReference type="ChEBI" id="CHEBI:58349"/>
        <dbReference type="ChEBI" id="CHEBI:62192"/>
    </reaction>
</comment>
<comment type="subcellular location">
    <subcellularLocation>
        <location evidence="1">Plastid</location>
        <location evidence="1">Chloroplast thylakoid membrane</location>
        <topology evidence="1">Multi-pass membrane protein</topology>
    </subcellularLocation>
</comment>
<comment type="similarity">
    <text evidence="1">Belongs to the complex I subunit 4 family.</text>
</comment>
<sequence>MNYFPWLTIIVFLPISAGSLLFFLPHKGNKLIKWYTICICILELLLTTYAFCYHFRLDDPLIQLAEDYKWINFFDFYWRLGIDGLSIGPILLTGFITTLATLAAWPVTRDSRLFHFLMLAMYSGQIGSFSSRDLLLFFIMWEFELIPVYLLLSMWGGKKRLYSATKFILYTAGGSVFLLIGVLGLGLYGSNEPTLNFETLANQSYPVALEIIFYIGFLIAFAVKSPIIPLHTWLPDTHGEAHYSTCMLLAGILLKMGAYGLVRINMELLPHAHSIFSPWLIIVGTMQIIYAASTSLGQRNLKKRIAYSSVSHMGFIIIGIGSITDTGLNGAILQIISHGFIGAALFFLAGTSYDRMRLVYLDEMGGMAVSIPKIFTMFSILSMASLALPGMSGFVAELIVFFGIITSQKYFLMPKILITFVMAIGMILTPIYSLSMSRQMFYGYKLFNAPSSYFFDSGPRELFVSISIFLPVIGIGIYPDFVLSLSGEKVETILYNYFYR</sequence>
<gene>
    <name evidence="1" type="primary">ndhD</name>
</gene>
<accession>Q2L955</accession>
<evidence type="ECO:0000255" key="1">
    <source>
        <dbReference type="HAMAP-Rule" id="MF_00491"/>
    </source>
</evidence>
<organism>
    <name type="scientific">Gossypium hirsutum</name>
    <name type="common">Upland cotton</name>
    <name type="synonym">Gossypium mexicanum</name>
    <dbReference type="NCBI Taxonomy" id="3635"/>
    <lineage>
        <taxon>Eukaryota</taxon>
        <taxon>Viridiplantae</taxon>
        <taxon>Streptophyta</taxon>
        <taxon>Embryophyta</taxon>
        <taxon>Tracheophyta</taxon>
        <taxon>Spermatophyta</taxon>
        <taxon>Magnoliopsida</taxon>
        <taxon>eudicotyledons</taxon>
        <taxon>Gunneridae</taxon>
        <taxon>Pentapetalae</taxon>
        <taxon>rosids</taxon>
        <taxon>malvids</taxon>
        <taxon>Malvales</taxon>
        <taxon>Malvaceae</taxon>
        <taxon>Malvoideae</taxon>
        <taxon>Gossypium</taxon>
    </lineage>
</organism>
<keyword id="KW-0150">Chloroplast</keyword>
<keyword id="KW-0472">Membrane</keyword>
<keyword id="KW-0520">NAD</keyword>
<keyword id="KW-0521">NADP</keyword>
<keyword id="KW-0934">Plastid</keyword>
<keyword id="KW-0618">Plastoquinone</keyword>
<keyword id="KW-0874">Quinone</keyword>
<keyword id="KW-1185">Reference proteome</keyword>
<keyword id="KW-0793">Thylakoid</keyword>
<keyword id="KW-1278">Translocase</keyword>
<keyword id="KW-0812">Transmembrane</keyword>
<keyword id="KW-1133">Transmembrane helix</keyword>
<feature type="chain" id="PRO_0000275910" description="NAD(P)H-quinone oxidoreductase chain 4, chloroplastic">
    <location>
        <begin position="1"/>
        <end position="500"/>
    </location>
</feature>
<feature type="transmembrane region" description="Helical" evidence="1">
    <location>
        <begin position="4"/>
        <end position="24"/>
    </location>
</feature>
<feature type="transmembrane region" description="Helical" evidence="1">
    <location>
        <begin position="31"/>
        <end position="51"/>
    </location>
</feature>
<feature type="transmembrane region" description="Helical" evidence="1">
    <location>
        <begin position="87"/>
        <end position="107"/>
    </location>
</feature>
<feature type="transmembrane region" description="Helical" evidence="1">
    <location>
        <begin position="113"/>
        <end position="130"/>
    </location>
</feature>
<feature type="transmembrane region" description="Helical" evidence="1">
    <location>
        <begin position="134"/>
        <end position="154"/>
    </location>
</feature>
<feature type="transmembrane region" description="Helical" evidence="1">
    <location>
        <begin position="167"/>
        <end position="187"/>
    </location>
</feature>
<feature type="transmembrane region" description="Helical" evidence="1">
    <location>
        <begin position="208"/>
        <end position="228"/>
    </location>
</feature>
<feature type="transmembrane region" description="Helical" evidence="1">
    <location>
        <begin position="242"/>
        <end position="262"/>
    </location>
</feature>
<feature type="transmembrane region" description="Helical" evidence="1">
    <location>
        <begin position="272"/>
        <end position="292"/>
    </location>
</feature>
<feature type="transmembrane region" description="Helical" evidence="1">
    <location>
        <begin position="305"/>
        <end position="325"/>
    </location>
</feature>
<feature type="transmembrane region" description="Helical" evidence="1">
    <location>
        <begin position="330"/>
        <end position="350"/>
    </location>
</feature>
<feature type="transmembrane region" description="Helical" evidence="1">
    <location>
        <begin position="386"/>
        <end position="406"/>
    </location>
</feature>
<feature type="transmembrane region" description="Helical" evidence="1">
    <location>
        <begin position="416"/>
        <end position="436"/>
    </location>
</feature>
<feature type="transmembrane region" description="Helical" evidence="1">
    <location>
        <begin position="462"/>
        <end position="482"/>
    </location>
</feature>
<proteinExistence type="inferred from homology"/>
<geneLocation type="chloroplast"/>